<name>YRKI_BACSU</name>
<feature type="chain" id="PRO_0000159072" description="Putative sulfur carrier protein YrkI">
    <location>
        <begin position="1"/>
        <end position="75"/>
    </location>
</feature>
<feature type="active site" description="Cysteine persulfide intermediate" evidence="1">
    <location>
        <position position="14"/>
    </location>
</feature>
<comment type="similarity">
    <text evidence="2">Belongs to the sulfur carrier protein TusA family.</text>
</comment>
<reference key="1">
    <citation type="journal article" date="1996" name="Microbiology">
        <title>Systematic sequencing of the 283 kb 210 degrees-232 degrees region of the Bacillus subtilis genome containing the skin element and many sporulation genes.</title>
        <authorList>
            <person name="Mizuno M."/>
            <person name="Masuda S."/>
            <person name="Takemaru K."/>
            <person name="Hosono S."/>
            <person name="Sato T."/>
            <person name="Takeuchi M."/>
            <person name="Kobayashi Y."/>
        </authorList>
    </citation>
    <scope>NUCLEOTIDE SEQUENCE [GENOMIC DNA]</scope>
    <source>
        <strain>168 / JH642</strain>
    </source>
</reference>
<reference key="2">
    <citation type="journal article" date="1997" name="Nature">
        <title>The complete genome sequence of the Gram-positive bacterium Bacillus subtilis.</title>
        <authorList>
            <person name="Kunst F."/>
            <person name="Ogasawara N."/>
            <person name="Moszer I."/>
            <person name="Albertini A.M."/>
            <person name="Alloni G."/>
            <person name="Azevedo V."/>
            <person name="Bertero M.G."/>
            <person name="Bessieres P."/>
            <person name="Bolotin A."/>
            <person name="Borchert S."/>
            <person name="Borriss R."/>
            <person name="Boursier L."/>
            <person name="Brans A."/>
            <person name="Braun M."/>
            <person name="Brignell S.C."/>
            <person name="Bron S."/>
            <person name="Brouillet S."/>
            <person name="Bruschi C.V."/>
            <person name="Caldwell B."/>
            <person name="Capuano V."/>
            <person name="Carter N.M."/>
            <person name="Choi S.-K."/>
            <person name="Codani J.-J."/>
            <person name="Connerton I.F."/>
            <person name="Cummings N.J."/>
            <person name="Daniel R.A."/>
            <person name="Denizot F."/>
            <person name="Devine K.M."/>
            <person name="Duesterhoeft A."/>
            <person name="Ehrlich S.D."/>
            <person name="Emmerson P.T."/>
            <person name="Entian K.-D."/>
            <person name="Errington J."/>
            <person name="Fabret C."/>
            <person name="Ferrari E."/>
            <person name="Foulger D."/>
            <person name="Fritz C."/>
            <person name="Fujita M."/>
            <person name="Fujita Y."/>
            <person name="Fuma S."/>
            <person name="Galizzi A."/>
            <person name="Galleron N."/>
            <person name="Ghim S.-Y."/>
            <person name="Glaser P."/>
            <person name="Goffeau A."/>
            <person name="Golightly E.J."/>
            <person name="Grandi G."/>
            <person name="Guiseppi G."/>
            <person name="Guy B.J."/>
            <person name="Haga K."/>
            <person name="Haiech J."/>
            <person name="Harwood C.R."/>
            <person name="Henaut A."/>
            <person name="Hilbert H."/>
            <person name="Holsappel S."/>
            <person name="Hosono S."/>
            <person name="Hullo M.-F."/>
            <person name="Itaya M."/>
            <person name="Jones L.-M."/>
            <person name="Joris B."/>
            <person name="Karamata D."/>
            <person name="Kasahara Y."/>
            <person name="Klaerr-Blanchard M."/>
            <person name="Klein C."/>
            <person name="Kobayashi Y."/>
            <person name="Koetter P."/>
            <person name="Koningstein G."/>
            <person name="Krogh S."/>
            <person name="Kumano M."/>
            <person name="Kurita K."/>
            <person name="Lapidus A."/>
            <person name="Lardinois S."/>
            <person name="Lauber J."/>
            <person name="Lazarevic V."/>
            <person name="Lee S.-M."/>
            <person name="Levine A."/>
            <person name="Liu H."/>
            <person name="Masuda S."/>
            <person name="Mauel C."/>
            <person name="Medigue C."/>
            <person name="Medina N."/>
            <person name="Mellado R.P."/>
            <person name="Mizuno M."/>
            <person name="Moestl D."/>
            <person name="Nakai S."/>
            <person name="Noback M."/>
            <person name="Noone D."/>
            <person name="O'Reilly M."/>
            <person name="Ogawa K."/>
            <person name="Ogiwara A."/>
            <person name="Oudega B."/>
            <person name="Park S.-H."/>
            <person name="Parro V."/>
            <person name="Pohl T.M."/>
            <person name="Portetelle D."/>
            <person name="Porwollik S."/>
            <person name="Prescott A.M."/>
            <person name="Presecan E."/>
            <person name="Pujic P."/>
            <person name="Purnelle B."/>
            <person name="Rapoport G."/>
            <person name="Rey M."/>
            <person name="Reynolds S."/>
            <person name="Rieger M."/>
            <person name="Rivolta C."/>
            <person name="Rocha E."/>
            <person name="Roche B."/>
            <person name="Rose M."/>
            <person name="Sadaie Y."/>
            <person name="Sato T."/>
            <person name="Scanlan E."/>
            <person name="Schleich S."/>
            <person name="Schroeter R."/>
            <person name="Scoffone F."/>
            <person name="Sekiguchi J."/>
            <person name="Sekowska A."/>
            <person name="Seror S.J."/>
            <person name="Serror P."/>
            <person name="Shin B.-S."/>
            <person name="Soldo B."/>
            <person name="Sorokin A."/>
            <person name="Tacconi E."/>
            <person name="Takagi T."/>
            <person name="Takahashi H."/>
            <person name="Takemaru K."/>
            <person name="Takeuchi M."/>
            <person name="Tamakoshi A."/>
            <person name="Tanaka T."/>
            <person name="Terpstra P."/>
            <person name="Tognoni A."/>
            <person name="Tosato V."/>
            <person name="Uchiyama S."/>
            <person name="Vandenbol M."/>
            <person name="Vannier F."/>
            <person name="Vassarotti A."/>
            <person name="Viari A."/>
            <person name="Wambutt R."/>
            <person name="Wedler E."/>
            <person name="Wedler H."/>
            <person name="Weitzenegger T."/>
            <person name="Winters P."/>
            <person name="Wipat A."/>
            <person name="Yamamoto H."/>
            <person name="Yamane K."/>
            <person name="Yasumoto K."/>
            <person name="Yata K."/>
            <person name="Yoshida K."/>
            <person name="Yoshikawa H.-F."/>
            <person name="Zumstein E."/>
            <person name="Yoshikawa H."/>
            <person name="Danchin A."/>
        </authorList>
    </citation>
    <scope>NUCLEOTIDE SEQUENCE [LARGE SCALE GENOMIC DNA]</scope>
    <source>
        <strain>168</strain>
    </source>
</reference>
<keyword id="KW-1185">Reference proteome</keyword>
<dbReference type="EMBL" id="D84432">
    <property type="protein sequence ID" value="BAA12364.1"/>
    <property type="molecule type" value="Genomic_DNA"/>
</dbReference>
<dbReference type="EMBL" id="AL009126">
    <property type="protein sequence ID" value="CAB14591.1"/>
    <property type="molecule type" value="Genomic_DNA"/>
</dbReference>
<dbReference type="PIR" id="G69976">
    <property type="entry name" value="G69976"/>
</dbReference>
<dbReference type="RefSeq" id="NP_390527.1">
    <property type="nucleotide sequence ID" value="NC_000964.3"/>
</dbReference>
<dbReference type="RefSeq" id="WP_003229888.1">
    <property type="nucleotide sequence ID" value="NZ_OZ025638.1"/>
</dbReference>
<dbReference type="SMR" id="P54436"/>
<dbReference type="FunCoup" id="P54436">
    <property type="interactions" value="130"/>
</dbReference>
<dbReference type="STRING" id="224308.BSU26500"/>
<dbReference type="PaxDb" id="224308-BSU26500"/>
<dbReference type="EnsemblBacteria" id="CAB14591">
    <property type="protein sequence ID" value="CAB14591"/>
    <property type="gene ID" value="BSU_26500"/>
</dbReference>
<dbReference type="GeneID" id="937657"/>
<dbReference type="KEGG" id="bsu:BSU26500"/>
<dbReference type="PATRIC" id="fig|224308.179.peg.2878"/>
<dbReference type="eggNOG" id="COG0425">
    <property type="taxonomic scope" value="Bacteria"/>
</dbReference>
<dbReference type="InParanoid" id="P54436"/>
<dbReference type="OrthoDB" id="9796234at2"/>
<dbReference type="PhylomeDB" id="P54436"/>
<dbReference type="BioCyc" id="BSUB:BSU26500-MONOMER"/>
<dbReference type="Proteomes" id="UP000001570">
    <property type="component" value="Chromosome"/>
</dbReference>
<dbReference type="CDD" id="cd00291">
    <property type="entry name" value="SirA_YedF_YeeD"/>
    <property type="match status" value="1"/>
</dbReference>
<dbReference type="Gene3D" id="3.30.110.40">
    <property type="entry name" value="TusA-like domain"/>
    <property type="match status" value="1"/>
</dbReference>
<dbReference type="InterPro" id="IPR001455">
    <property type="entry name" value="TusA-like"/>
</dbReference>
<dbReference type="InterPro" id="IPR036868">
    <property type="entry name" value="TusA-like_sf"/>
</dbReference>
<dbReference type="PANTHER" id="PTHR33279">
    <property type="entry name" value="SULFUR CARRIER PROTEIN YEDF-RELATED"/>
    <property type="match status" value="1"/>
</dbReference>
<dbReference type="PANTHER" id="PTHR33279:SF6">
    <property type="entry name" value="SULFUR CARRIER PROTEIN YEDF-RELATED"/>
    <property type="match status" value="1"/>
</dbReference>
<dbReference type="Pfam" id="PF01206">
    <property type="entry name" value="TusA"/>
    <property type="match status" value="1"/>
</dbReference>
<dbReference type="SUPFAM" id="SSF64307">
    <property type="entry name" value="SirA-like"/>
    <property type="match status" value="1"/>
</dbReference>
<dbReference type="PROSITE" id="PS01148">
    <property type="entry name" value="UPF0033"/>
    <property type="match status" value="1"/>
</dbReference>
<organism>
    <name type="scientific">Bacillus subtilis (strain 168)</name>
    <dbReference type="NCBI Taxonomy" id="224308"/>
    <lineage>
        <taxon>Bacteria</taxon>
        <taxon>Bacillati</taxon>
        <taxon>Bacillota</taxon>
        <taxon>Bacilli</taxon>
        <taxon>Bacillales</taxon>
        <taxon>Bacillaceae</taxon>
        <taxon>Bacillus</taxon>
    </lineage>
</organism>
<sequence length="75" mass="8238">MKSDKVLDAKGLACPMPIVRTKKAMNELESGQILEVHATDKGAKNDLTAWSKSGGHDLLEQTDEGDILKFWIQKG</sequence>
<accession>P54436</accession>
<gene>
    <name type="primary">yrkI</name>
    <name type="ordered locus">BSU26500</name>
</gene>
<protein>
    <recommendedName>
        <fullName>Putative sulfur carrier protein YrkI</fullName>
    </recommendedName>
</protein>
<proteinExistence type="inferred from homology"/>
<evidence type="ECO:0000250" key="1">
    <source>
        <dbReference type="UniProtKB" id="P0A890"/>
    </source>
</evidence>
<evidence type="ECO:0000305" key="2"/>